<name>RL32_SHEPA</name>
<gene>
    <name evidence="1" type="primary">rpmF</name>
    <name type="ordered locus">Spea_2498</name>
</gene>
<organism>
    <name type="scientific">Shewanella pealeana (strain ATCC 700345 / ANG-SQ1)</name>
    <dbReference type="NCBI Taxonomy" id="398579"/>
    <lineage>
        <taxon>Bacteria</taxon>
        <taxon>Pseudomonadati</taxon>
        <taxon>Pseudomonadota</taxon>
        <taxon>Gammaproteobacteria</taxon>
        <taxon>Alteromonadales</taxon>
        <taxon>Shewanellaceae</taxon>
        <taxon>Shewanella</taxon>
    </lineage>
</organism>
<comment type="similarity">
    <text evidence="1">Belongs to the bacterial ribosomal protein bL32 family.</text>
</comment>
<sequence>MAVQQNKKSRSKRGMRRSHDALSTAQLSVDATSGELHRRHNVTADGFYRGQKVINK</sequence>
<accession>A8H5I1</accession>
<reference key="1">
    <citation type="submission" date="2007-10" db="EMBL/GenBank/DDBJ databases">
        <title>Complete sequence of Shewanella pealeana ATCC 700345.</title>
        <authorList>
            <consortium name="US DOE Joint Genome Institute"/>
            <person name="Copeland A."/>
            <person name="Lucas S."/>
            <person name="Lapidus A."/>
            <person name="Barry K."/>
            <person name="Glavina del Rio T."/>
            <person name="Dalin E."/>
            <person name="Tice H."/>
            <person name="Pitluck S."/>
            <person name="Chertkov O."/>
            <person name="Brettin T."/>
            <person name="Bruce D."/>
            <person name="Detter J.C."/>
            <person name="Han C."/>
            <person name="Schmutz J."/>
            <person name="Larimer F."/>
            <person name="Land M."/>
            <person name="Hauser L."/>
            <person name="Kyrpides N."/>
            <person name="Kim E."/>
            <person name="Zhao J.-S.Z."/>
            <person name="Manno D."/>
            <person name="Hawari J."/>
            <person name="Richardson P."/>
        </authorList>
    </citation>
    <scope>NUCLEOTIDE SEQUENCE [LARGE SCALE GENOMIC DNA]</scope>
    <source>
        <strain>ATCC 700345 / ANG-SQ1</strain>
    </source>
</reference>
<feature type="chain" id="PRO_1000079345" description="Large ribosomal subunit protein bL32">
    <location>
        <begin position="1"/>
        <end position="56"/>
    </location>
</feature>
<feature type="region of interest" description="Disordered" evidence="2">
    <location>
        <begin position="1"/>
        <end position="37"/>
    </location>
</feature>
<feature type="compositionally biased region" description="Basic residues" evidence="2">
    <location>
        <begin position="7"/>
        <end position="16"/>
    </location>
</feature>
<feature type="compositionally biased region" description="Polar residues" evidence="2">
    <location>
        <begin position="21"/>
        <end position="31"/>
    </location>
</feature>
<proteinExistence type="inferred from homology"/>
<evidence type="ECO:0000255" key="1">
    <source>
        <dbReference type="HAMAP-Rule" id="MF_00340"/>
    </source>
</evidence>
<evidence type="ECO:0000256" key="2">
    <source>
        <dbReference type="SAM" id="MobiDB-lite"/>
    </source>
</evidence>
<evidence type="ECO:0000305" key="3"/>
<dbReference type="EMBL" id="CP000851">
    <property type="protein sequence ID" value="ABV87818.1"/>
    <property type="molecule type" value="Genomic_DNA"/>
</dbReference>
<dbReference type="RefSeq" id="WP_012155726.1">
    <property type="nucleotide sequence ID" value="NC_009901.1"/>
</dbReference>
<dbReference type="SMR" id="A8H5I1"/>
<dbReference type="STRING" id="398579.Spea_2498"/>
<dbReference type="KEGG" id="spl:Spea_2498"/>
<dbReference type="eggNOG" id="COG0333">
    <property type="taxonomic scope" value="Bacteria"/>
</dbReference>
<dbReference type="HOGENOM" id="CLU_129084_2_1_6"/>
<dbReference type="OrthoDB" id="9801927at2"/>
<dbReference type="Proteomes" id="UP000002608">
    <property type="component" value="Chromosome"/>
</dbReference>
<dbReference type="GO" id="GO:0015934">
    <property type="term" value="C:large ribosomal subunit"/>
    <property type="evidence" value="ECO:0007669"/>
    <property type="project" value="InterPro"/>
</dbReference>
<dbReference type="GO" id="GO:0003735">
    <property type="term" value="F:structural constituent of ribosome"/>
    <property type="evidence" value="ECO:0007669"/>
    <property type="project" value="InterPro"/>
</dbReference>
<dbReference type="GO" id="GO:0006412">
    <property type="term" value="P:translation"/>
    <property type="evidence" value="ECO:0007669"/>
    <property type="project" value="UniProtKB-UniRule"/>
</dbReference>
<dbReference type="HAMAP" id="MF_00340">
    <property type="entry name" value="Ribosomal_bL32"/>
    <property type="match status" value="1"/>
</dbReference>
<dbReference type="InterPro" id="IPR002677">
    <property type="entry name" value="Ribosomal_bL32"/>
</dbReference>
<dbReference type="InterPro" id="IPR044957">
    <property type="entry name" value="Ribosomal_bL32_bact"/>
</dbReference>
<dbReference type="InterPro" id="IPR011332">
    <property type="entry name" value="Ribosomal_zn-bd"/>
</dbReference>
<dbReference type="NCBIfam" id="TIGR01031">
    <property type="entry name" value="rpmF_bact"/>
    <property type="match status" value="1"/>
</dbReference>
<dbReference type="PANTHER" id="PTHR35534">
    <property type="entry name" value="50S RIBOSOMAL PROTEIN L32"/>
    <property type="match status" value="1"/>
</dbReference>
<dbReference type="PANTHER" id="PTHR35534:SF1">
    <property type="entry name" value="LARGE RIBOSOMAL SUBUNIT PROTEIN BL32"/>
    <property type="match status" value="1"/>
</dbReference>
<dbReference type="Pfam" id="PF01783">
    <property type="entry name" value="Ribosomal_L32p"/>
    <property type="match status" value="1"/>
</dbReference>
<dbReference type="SUPFAM" id="SSF57829">
    <property type="entry name" value="Zn-binding ribosomal proteins"/>
    <property type="match status" value="1"/>
</dbReference>
<protein>
    <recommendedName>
        <fullName evidence="1">Large ribosomal subunit protein bL32</fullName>
    </recommendedName>
    <alternativeName>
        <fullName evidence="3">50S ribosomal protein L32</fullName>
    </alternativeName>
</protein>
<keyword id="KW-1185">Reference proteome</keyword>
<keyword id="KW-0687">Ribonucleoprotein</keyword>
<keyword id="KW-0689">Ribosomal protein</keyword>